<dbReference type="EMBL" id="X04282">
    <property type="protein sequence ID" value="CAA27829.1"/>
    <property type="molecule type" value="Genomic_DNA"/>
</dbReference>
<dbReference type="PIR" id="S07372">
    <property type="entry name" value="S07372"/>
</dbReference>
<dbReference type="SMR" id="P05680"/>
<keyword id="KW-0614">Plasmid</keyword>
<keyword id="KW-0814">Transposable element</keyword>
<organism>
    <name type="scientific">Agrobacterium tumefaciens (strain T37)</name>
    <dbReference type="NCBI Taxonomy" id="176300"/>
    <lineage>
        <taxon>Bacteria</taxon>
        <taxon>Pseudomonadati</taxon>
        <taxon>Pseudomonadota</taxon>
        <taxon>Alphaproteobacteria</taxon>
        <taxon>Hyphomicrobiales</taxon>
        <taxon>Rhizobiaceae</taxon>
        <taxon>Rhizobium/Agrobacterium group</taxon>
        <taxon>Agrobacterium</taxon>
        <taxon>Agrobacterium tumefaciens complex</taxon>
    </lineage>
</organism>
<evidence type="ECO:0000256" key="1">
    <source>
        <dbReference type="SAM" id="MobiDB-lite"/>
    </source>
</evidence>
<name>YI31_AGRT7</name>
<proteinExistence type="predicted"/>
<sequence>MKAVADTLGVSRSNLIERLKGRSKPRGPYNKAEDAELLPAIRRLVDQRPTYGYRRIAASSIAKGEPPISLSSTPNGSIASWVTTPCYWRSTQPFARAASTMARSWSCAPTCAGARTAWSSPAGMARSFVSPSSSTPSTARSSPGRPLPMQAFPAQTCAT</sequence>
<accession>P05680</accession>
<reference key="1">
    <citation type="journal article" date="1986" name="Nucleic Acids Res.">
        <title>Nucleotide sequence of an insertion sequence (IS) element identified in the T-DNA region of a spontaneous variant of the Ti-plasmid pTiT37.</title>
        <authorList>
            <person name="Vanderleyden J."/>
            <person name="Desair J."/>
            <person name="de Meirsman C."/>
            <person name="Michiels K."/>
            <person name="van Gool A.P."/>
            <person name="Chilton M.-D."/>
            <person name="Jen G.C."/>
        </authorList>
    </citation>
    <scope>NUCLEOTIDE SEQUENCE [GENOMIC DNA]</scope>
    <source>
        <strain>A208</strain>
    </source>
</reference>
<geneLocation type="plasmid">
    <name>pTiT37</name>
</geneLocation>
<feature type="chain" id="PRO_0000075513" description="Insertion element IS136 uncharacterized 16.9 kDa protein">
    <location>
        <begin position="1"/>
        <end position="159"/>
    </location>
</feature>
<feature type="region of interest" description="Disordered" evidence="1">
    <location>
        <begin position="126"/>
        <end position="159"/>
    </location>
</feature>
<feature type="compositionally biased region" description="Low complexity" evidence="1">
    <location>
        <begin position="126"/>
        <end position="142"/>
    </location>
</feature>
<protein>
    <recommendedName>
        <fullName>Insertion element IS136 uncharacterized 16.9 kDa protein</fullName>
    </recommendedName>
</protein>